<reference key="1">
    <citation type="journal article" date="2002" name="Nature">
        <title>The genome sequence of Schizosaccharomyces pombe.</title>
        <authorList>
            <person name="Wood V."/>
            <person name="Gwilliam R."/>
            <person name="Rajandream M.A."/>
            <person name="Lyne M.H."/>
            <person name="Lyne R."/>
            <person name="Stewart A."/>
            <person name="Sgouros J.G."/>
            <person name="Peat N."/>
            <person name="Hayles J."/>
            <person name="Baker S.G."/>
            <person name="Basham D."/>
            <person name="Bowman S."/>
            <person name="Brooks K."/>
            <person name="Brown D."/>
            <person name="Brown S."/>
            <person name="Chillingworth T."/>
            <person name="Churcher C.M."/>
            <person name="Collins M."/>
            <person name="Connor R."/>
            <person name="Cronin A."/>
            <person name="Davis P."/>
            <person name="Feltwell T."/>
            <person name="Fraser A."/>
            <person name="Gentles S."/>
            <person name="Goble A."/>
            <person name="Hamlin N."/>
            <person name="Harris D.E."/>
            <person name="Hidalgo J."/>
            <person name="Hodgson G."/>
            <person name="Holroyd S."/>
            <person name="Hornsby T."/>
            <person name="Howarth S."/>
            <person name="Huckle E.J."/>
            <person name="Hunt S."/>
            <person name="Jagels K."/>
            <person name="James K.D."/>
            <person name="Jones L."/>
            <person name="Jones M."/>
            <person name="Leather S."/>
            <person name="McDonald S."/>
            <person name="McLean J."/>
            <person name="Mooney P."/>
            <person name="Moule S."/>
            <person name="Mungall K.L."/>
            <person name="Murphy L.D."/>
            <person name="Niblett D."/>
            <person name="Odell C."/>
            <person name="Oliver K."/>
            <person name="O'Neil S."/>
            <person name="Pearson D."/>
            <person name="Quail M.A."/>
            <person name="Rabbinowitsch E."/>
            <person name="Rutherford K.M."/>
            <person name="Rutter S."/>
            <person name="Saunders D."/>
            <person name="Seeger K."/>
            <person name="Sharp S."/>
            <person name="Skelton J."/>
            <person name="Simmonds M.N."/>
            <person name="Squares R."/>
            <person name="Squares S."/>
            <person name="Stevens K."/>
            <person name="Taylor K."/>
            <person name="Taylor R.G."/>
            <person name="Tivey A."/>
            <person name="Walsh S.V."/>
            <person name="Warren T."/>
            <person name="Whitehead S."/>
            <person name="Woodward J.R."/>
            <person name="Volckaert G."/>
            <person name="Aert R."/>
            <person name="Robben J."/>
            <person name="Grymonprez B."/>
            <person name="Weltjens I."/>
            <person name="Vanstreels E."/>
            <person name="Rieger M."/>
            <person name="Schaefer M."/>
            <person name="Mueller-Auer S."/>
            <person name="Gabel C."/>
            <person name="Fuchs M."/>
            <person name="Duesterhoeft A."/>
            <person name="Fritzc C."/>
            <person name="Holzer E."/>
            <person name="Moestl D."/>
            <person name="Hilbert H."/>
            <person name="Borzym K."/>
            <person name="Langer I."/>
            <person name="Beck A."/>
            <person name="Lehrach H."/>
            <person name="Reinhardt R."/>
            <person name="Pohl T.M."/>
            <person name="Eger P."/>
            <person name="Zimmermann W."/>
            <person name="Wedler H."/>
            <person name="Wambutt R."/>
            <person name="Purnelle B."/>
            <person name="Goffeau A."/>
            <person name="Cadieu E."/>
            <person name="Dreano S."/>
            <person name="Gloux S."/>
            <person name="Lelaure V."/>
            <person name="Mottier S."/>
            <person name="Galibert F."/>
            <person name="Aves S.J."/>
            <person name="Xiang Z."/>
            <person name="Hunt C."/>
            <person name="Moore K."/>
            <person name="Hurst S.M."/>
            <person name="Lucas M."/>
            <person name="Rochet M."/>
            <person name="Gaillardin C."/>
            <person name="Tallada V.A."/>
            <person name="Garzon A."/>
            <person name="Thode G."/>
            <person name="Daga R.R."/>
            <person name="Cruzado L."/>
            <person name="Jimenez J."/>
            <person name="Sanchez M."/>
            <person name="del Rey F."/>
            <person name="Benito J."/>
            <person name="Dominguez A."/>
            <person name="Revuelta J.L."/>
            <person name="Moreno S."/>
            <person name="Armstrong J."/>
            <person name="Forsburg S.L."/>
            <person name="Cerutti L."/>
            <person name="Lowe T."/>
            <person name="McCombie W.R."/>
            <person name="Paulsen I."/>
            <person name="Potashkin J."/>
            <person name="Shpakovski G.V."/>
            <person name="Ussery D."/>
            <person name="Barrell B.G."/>
            <person name="Nurse P."/>
        </authorList>
    </citation>
    <scope>NUCLEOTIDE SEQUENCE [LARGE SCALE GENOMIC DNA]</scope>
    <source>
        <strain>972 / ATCC 24843</strain>
    </source>
</reference>
<reference key="2">
    <citation type="journal article" date="2000" name="Genes Cells">
        <title>Large-scale screening of intracellular protein localization in living fission yeast cells by the use of a GFP-fusion genomic DNA library.</title>
        <authorList>
            <person name="Ding D.-Q."/>
            <person name="Tomita Y."/>
            <person name="Yamamoto A."/>
            <person name="Chikashige Y."/>
            <person name="Haraguchi T."/>
            <person name="Hiraoka Y."/>
        </authorList>
    </citation>
    <scope>NUCLEOTIDE SEQUENCE [LARGE SCALE GENOMIC DNA] OF 88-258</scope>
    <scope>SUBCELLULAR LOCATION</scope>
    <source>
        <strain>ATCC 38364 / 968</strain>
    </source>
</reference>
<reference key="3">
    <citation type="journal article" date="2005" name="Curr. Biol.">
        <title>A large-scale screen in S. pombe identifies seven novel genes required for critical meiotic events.</title>
        <authorList>
            <person name="Martin-Castellanos C."/>
            <person name="Blanco M."/>
            <person name="Rozalen A.E."/>
            <person name="Perez-Hidalgo L."/>
            <person name="Garcia A.I."/>
            <person name="Conde F."/>
            <person name="Mata J."/>
            <person name="Ellermeier C."/>
            <person name="Davis L."/>
            <person name="San-Segundo P."/>
            <person name="Smith G.R."/>
            <person name="Moreno S."/>
        </authorList>
    </citation>
    <scope>FUNCTION IN MEIOSIS</scope>
</reference>
<gene>
    <name type="primary">mug135</name>
    <name type="ORF">SPCC330.04c</name>
</gene>
<organism>
    <name type="scientific">Schizosaccharomyces pombe (strain 972 / ATCC 24843)</name>
    <name type="common">Fission yeast</name>
    <dbReference type="NCBI Taxonomy" id="284812"/>
    <lineage>
        <taxon>Eukaryota</taxon>
        <taxon>Fungi</taxon>
        <taxon>Dikarya</taxon>
        <taxon>Ascomycota</taxon>
        <taxon>Taphrinomycotina</taxon>
        <taxon>Schizosaccharomycetes</taxon>
        <taxon>Schizosaccharomycetales</taxon>
        <taxon>Schizosaccharomycetaceae</taxon>
        <taxon>Schizosaccharomyces</taxon>
    </lineage>
</organism>
<comment type="function">
    <text evidence="2">Has a role in meiosis.</text>
</comment>
<comment type="subcellular location">
    <subcellularLocation>
        <location evidence="1">Nucleus</location>
    </subcellularLocation>
</comment>
<comment type="similarity">
    <text evidence="3">Belongs to the UPF0612 family.</text>
</comment>
<keyword id="KW-0002">3D-structure</keyword>
<keyword id="KW-0469">Meiosis</keyword>
<keyword id="KW-0539">Nucleus</keyword>
<keyword id="KW-1185">Reference proteome</keyword>
<feature type="chain" id="PRO_0000278626" description="Meiotically up-regulated gene 135 protein">
    <location>
        <begin position="1"/>
        <end position="357"/>
    </location>
</feature>
<accession>O74876</accession>
<accession>Q9US90</accession>
<sequence>MSEEDNRLNELFANDLGVQPPCERSLKEGRRFLNDFEIAAKKKLLELERKALEDKEKNLNFVVESERTLFNSKKRAFDNDECYNDRCKLFRGIVNEWGRSERTLDSLDEPPAWFRREMGEWKKAREEDKAEWKKAREEDKAEWKKAREEDKAEWKKAREEDKAEWKKAREEDKAEWKKAREEDKEWRNSMDEWRKSMDEWRKSMDEWRKSMDEWRKSTDEWRKSTDERLENLLNIVREILDVQRDMRNDLSNLTRKVDRMDMRLSRNNNMIMRSFAQPITEVPFFNGDIPDPNLPRITRIEDIDSLSEENCTRYLKGYGVSYDENDQSLWKRQLAKAVGLTAAYDESYTFSPFSSSE</sequence>
<name>MU135_SCHPO</name>
<dbReference type="EMBL" id="CU329672">
    <property type="protein sequence ID" value="CAA20909.1"/>
    <property type="molecule type" value="Genomic_DNA"/>
</dbReference>
<dbReference type="EMBL" id="AB027955">
    <property type="protein sequence ID" value="BAA87259.1"/>
    <property type="molecule type" value="Genomic_DNA"/>
</dbReference>
<dbReference type="PIR" id="T41314">
    <property type="entry name" value="T41314"/>
</dbReference>
<dbReference type="RefSeq" id="NP_587704.1">
    <property type="nucleotide sequence ID" value="NM_001022699.2"/>
</dbReference>
<dbReference type="PDB" id="9JA5">
    <property type="method" value="EM"/>
    <property type="resolution" value="2.70 A"/>
    <property type="chains" value="A/B/C/D/E/F=211-357"/>
</dbReference>
<dbReference type="PDB" id="9JA6">
    <property type="method" value="EM"/>
    <property type="resolution" value="4.40 A"/>
    <property type="chains" value="A/B/C/D=1-357"/>
</dbReference>
<dbReference type="PDBsum" id="9JA5"/>
<dbReference type="PDBsum" id="9JA6"/>
<dbReference type="SMR" id="O74876"/>
<dbReference type="BioGRID" id="275541">
    <property type="interactions" value="7"/>
</dbReference>
<dbReference type="STRING" id="284812.O74876"/>
<dbReference type="PaxDb" id="4896-SPCC330.04c.1"/>
<dbReference type="EnsemblFungi" id="SPCC330.04c.1">
    <property type="protein sequence ID" value="SPCC330.04c.1:pep"/>
    <property type="gene ID" value="SPCC330.04c"/>
</dbReference>
<dbReference type="GeneID" id="2538967"/>
<dbReference type="KEGG" id="spo:2538967"/>
<dbReference type="PomBase" id="SPCC330.04c">
    <property type="gene designation" value="mug135"/>
</dbReference>
<dbReference type="VEuPathDB" id="FungiDB:SPCC330.04c"/>
<dbReference type="eggNOG" id="ENOG502STX1">
    <property type="taxonomic scope" value="Eukaryota"/>
</dbReference>
<dbReference type="HOGENOM" id="CLU_062677_0_0_1"/>
<dbReference type="InParanoid" id="O74876"/>
<dbReference type="PhylomeDB" id="O74876"/>
<dbReference type="PRO" id="PR:O74876"/>
<dbReference type="Proteomes" id="UP000002485">
    <property type="component" value="Chromosome III"/>
</dbReference>
<dbReference type="GO" id="GO:0005654">
    <property type="term" value="C:nucleoplasm"/>
    <property type="evidence" value="ECO:0000314"/>
    <property type="project" value="PomBase"/>
</dbReference>
<dbReference type="GO" id="GO:0051321">
    <property type="term" value="P:meiotic cell cycle"/>
    <property type="evidence" value="ECO:0007669"/>
    <property type="project" value="UniProtKB-KW"/>
</dbReference>
<dbReference type="GO" id="GO:0110134">
    <property type="term" value="P:meiotic drive"/>
    <property type="evidence" value="ECO:0000315"/>
    <property type="project" value="PomBase"/>
</dbReference>
<dbReference type="InterPro" id="IPR013902">
    <property type="entry name" value="Mug135-like_C"/>
</dbReference>
<dbReference type="Pfam" id="PF08593">
    <property type="entry name" value="Mug135_C"/>
    <property type="match status" value="1"/>
</dbReference>
<evidence type="ECO:0000269" key="1">
    <source>
    </source>
</evidence>
<evidence type="ECO:0000269" key="2">
    <source>
    </source>
</evidence>
<evidence type="ECO:0000305" key="3"/>
<protein>
    <recommendedName>
        <fullName>Meiotically up-regulated gene 135 protein</fullName>
    </recommendedName>
</protein>
<proteinExistence type="evidence at protein level"/>